<gene>
    <name evidence="1" type="primary">ccmA2</name>
    <name type="ordered locus">Rmet_4060</name>
</gene>
<comment type="function">
    <text evidence="1">Part of the ABC transporter complex CcmAB involved in the biogenesis of c-type cytochromes; once thought to export heme, this seems not to be the case, but its exact role is uncertain. Responsible for energy coupling to the transport system.</text>
</comment>
<comment type="catalytic activity">
    <reaction evidence="1">
        <text>heme b(in) + ATP + H2O = heme b(out) + ADP + phosphate + H(+)</text>
        <dbReference type="Rhea" id="RHEA:19261"/>
        <dbReference type="ChEBI" id="CHEBI:15377"/>
        <dbReference type="ChEBI" id="CHEBI:15378"/>
        <dbReference type="ChEBI" id="CHEBI:30616"/>
        <dbReference type="ChEBI" id="CHEBI:43474"/>
        <dbReference type="ChEBI" id="CHEBI:60344"/>
        <dbReference type="ChEBI" id="CHEBI:456216"/>
        <dbReference type="EC" id="7.6.2.5"/>
    </reaction>
</comment>
<comment type="subunit">
    <text evidence="1">The complex is composed of two ATP-binding proteins (CcmA) and two transmembrane proteins (CcmB).</text>
</comment>
<comment type="subcellular location">
    <subcellularLocation>
        <location evidence="1">Cell inner membrane</location>
        <topology evidence="1">Peripheral membrane protein</topology>
    </subcellularLocation>
</comment>
<comment type="similarity">
    <text evidence="1">Belongs to the ABC transporter superfamily. CcmA exporter (TC 3.A.1.107) family.</text>
</comment>
<feature type="chain" id="PRO_0000271945" description="Cytochrome c biogenesis ATP-binding export protein CcmA 2">
    <location>
        <begin position="1"/>
        <end position="211"/>
    </location>
</feature>
<feature type="domain" description="ABC transporter" evidence="1">
    <location>
        <begin position="6"/>
        <end position="208"/>
    </location>
</feature>
<feature type="binding site" evidence="1">
    <location>
        <begin position="38"/>
        <end position="45"/>
    </location>
    <ligand>
        <name>ATP</name>
        <dbReference type="ChEBI" id="CHEBI:30616"/>
    </ligand>
</feature>
<protein>
    <recommendedName>
        <fullName evidence="1">Cytochrome c biogenesis ATP-binding export protein CcmA 2</fullName>
        <ecNumber evidence="1">7.6.2.5</ecNumber>
    </recommendedName>
    <alternativeName>
        <fullName evidence="1">Heme exporter protein A 2</fullName>
    </alternativeName>
</protein>
<name>CCMA2_CUPMC</name>
<geneLocation type="plasmid">
    <name>megaplasmid CH34</name>
</geneLocation>
<keyword id="KW-0067">ATP-binding</keyword>
<keyword id="KW-0997">Cell inner membrane</keyword>
<keyword id="KW-1003">Cell membrane</keyword>
<keyword id="KW-0201">Cytochrome c-type biogenesis</keyword>
<keyword id="KW-0472">Membrane</keyword>
<keyword id="KW-0547">Nucleotide-binding</keyword>
<keyword id="KW-0614">Plasmid</keyword>
<keyword id="KW-1185">Reference proteome</keyword>
<keyword id="KW-1278">Translocase</keyword>
<keyword id="KW-0813">Transport</keyword>
<reference key="1">
    <citation type="journal article" date="2010" name="PLoS ONE">
        <title>The complete genome sequence of Cupriavidus metallidurans strain CH34, a master survivalist in harsh and anthropogenic environments.</title>
        <authorList>
            <person name="Janssen P.J."/>
            <person name="Van Houdt R."/>
            <person name="Moors H."/>
            <person name="Monsieurs P."/>
            <person name="Morin N."/>
            <person name="Michaux A."/>
            <person name="Benotmane M.A."/>
            <person name="Leys N."/>
            <person name="Vallaeys T."/>
            <person name="Lapidus A."/>
            <person name="Monchy S."/>
            <person name="Medigue C."/>
            <person name="Taghavi S."/>
            <person name="McCorkle S."/>
            <person name="Dunn J."/>
            <person name="van der Lelie D."/>
            <person name="Mergeay M."/>
        </authorList>
    </citation>
    <scope>NUCLEOTIDE SEQUENCE [LARGE SCALE GENOMIC DNA]</scope>
    <source>
        <strain>ATCC 43123 / DSM 2839 / NBRC 102507 / CH34</strain>
    </source>
</reference>
<proteinExistence type="inferred from homology"/>
<sequence>MADAVLEARELGVRRGHCAIFRGLGISLAPGDLLQVMGPNGAGKTSLLRVLSSLMPPAEGDLYWRGRAVRAGDPDYLAQVAYLGHVNGIYPDLSAFENLQFAARMAGQQPDADAMHHALARFGLDRVADAPARTLSQGQRRRVALSRLALTPRALWLLDEPLTSLDDASTDCFHTLLAEHLQRGGIAVVATHQRLPAEGAVLDLATDAGSP</sequence>
<evidence type="ECO:0000255" key="1">
    <source>
        <dbReference type="HAMAP-Rule" id="MF_01707"/>
    </source>
</evidence>
<accession>Q1LFZ8</accession>
<organism>
    <name type="scientific">Cupriavidus metallidurans (strain ATCC 43123 / DSM 2839 / NBRC 102507 / CH34)</name>
    <name type="common">Ralstonia metallidurans</name>
    <dbReference type="NCBI Taxonomy" id="266264"/>
    <lineage>
        <taxon>Bacteria</taxon>
        <taxon>Pseudomonadati</taxon>
        <taxon>Pseudomonadota</taxon>
        <taxon>Betaproteobacteria</taxon>
        <taxon>Burkholderiales</taxon>
        <taxon>Burkholderiaceae</taxon>
        <taxon>Cupriavidus</taxon>
    </lineage>
</organism>
<dbReference type="EC" id="7.6.2.5" evidence="1"/>
<dbReference type="EMBL" id="CP000353">
    <property type="protein sequence ID" value="ABF10928.1"/>
    <property type="molecule type" value="Genomic_DNA"/>
</dbReference>
<dbReference type="RefSeq" id="WP_011518556.1">
    <property type="nucleotide sequence ID" value="NC_007974.2"/>
</dbReference>
<dbReference type="SMR" id="Q1LFZ8"/>
<dbReference type="KEGG" id="rme:Rmet_4060"/>
<dbReference type="eggNOG" id="COG4133">
    <property type="taxonomic scope" value="Bacteria"/>
</dbReference>
<dbReference type="HOGENOM" id="CLU_000604_1_2_4"/>
<dbReference type="Proteomes" id="UP000002429">
    <property type="component" value="Plasmid megaplasmid CH34"/>
</dbReference>
<dbReference type="GO" id="GO:0005886">
    <property type="term" value="C:plasma membrane"/>
    <property type="evidence" value="ECO:0007669"/>
    <property type="project" value="UniProtKB-SubCell"/>
</dbReference>
<dbReference type="GO" id="GO:0015439">
    <property type="term" value="F:ABC-type heme transporter activity"/>
    <property type="evidence" value="ECO:0007669"/>
    <property type="project" value="UniProtKB-EC"/>
</dbReference>
<dbReference type="GO" id="GO:0005524">
    <property type="term" value="F:ATP binding"/>
    <property type="evidence" value="ECO:0007669"/>
    <property type="project" value="UniProtKB-KW"/>
</dbReference>
<dbReference type="GO" id="GO:0016887">
    <property type="term" value="F:ATP hydrolysis activity"/>
    <property type="evidence" value="ECO:0007669"/>
    <property type="project" value="InterPro"/>
</dbReference>
<dbReference type="GO" id="GO:0017004">
    <property type="term" value="P:cytochrome complex assembly"/>
    <property type="evidence" value="ECO:0007669"/>
    <property type="project" value="UniProtKB-KW"/>
</dbReference>
<dbReference type="Gene3D" id="3.40.50.300">
    <property type="entry name" value="P-loop containing nucleotide triphosphate hydrolases"/>
    <property type="match status" value="1"/>
</dbReference>
<dbReference type="InterPro" id="IPR003593">
    <property type="entry name" value="AAA+_ATPase"/>
</dbReference>
<dbReference type="InterPro" id="IPR003439">
    <property type="entry name" value="ABC_transporter-like_ATP-bd"/>
</dbReference>
<dbReference type="InterPro" id="IPR017871">
    <property type="entry name" value="ABC_transporter-like_CS"/>
</dbReference>
<dbReference type="InterPro" id="IPR005895">
    <property type="entry name" value="ABC_transptr_haem_export_CcmA"/>
</dbReference>
<dbReference type="InterPro" id="IPR027417">
    <property type="entry name" value="P-loop_NTPase"/>
</dbReference>
<dbReference type="NCBIfam" id="TIGR01189">
    <property type="entry name" value="ccmA"/>
    <property type="match status" value="1"/>
</dbReference>
<dbReference type="NCBIfam" id="NF010061">
    <property type="entry name" value="PRK13538.1"/>
    <property type="match status" value="1"/>
</dbReference>
<dbReference type="PANTHER" id="PTHR43499">
    <property type="entry name" value="ABC TRANSPORTER I FAMILY MEMBER 1"/>
    <property type="match status" value="1"/>
</dbReference>
<dbReference type="PANTHER" id="PTHR43499:SF1">
    <property type="entry name" value="ABC TRANSPORTER I FAMILY MEMBER 1"/>
    <property type="match status" value="1"/>
</dbReference>
<dbReference type="Pfam" id="PF00005">
    <property type="entry name" value="ABC_tran"/>
    <property type="match status" value="1"/>
</dbReference>
<dbReference type="SMART" id="SM00382">
    <property type="entry name" value="AAA"/>
    <property type="match status" value="1"/>
</dbReference>
<dbReference type="SUPFAM" id="SSF52540">
    <property type="entry name" value="P-loop containing nucleoside triphosphate hydrolases"/>
    <property type="match status" value="1"/>
</dbReference>
<dbReference type="PROSITE" id="PS00211">
    <property type="entry name" value="ABC_TRANSPORTER_1"/>
    <property type="match status" value="1"/>
</dbReference>
<dbReference type="PROSITE" id="PS50893">
    <property type="entry name" value="ABC_TRANSPORTER_2"/>
    <property type="match status" value="1"/>
</dbReference>
<dbReference type="PROSITE" id="PS51243">
    <property type="entry name" value="CCMA"/>
    <property type="match status" value="1"/>
</dbReference>